<sequence length="299" mass="33176">MFRGSIPPLPTPFRRGRLDEEALRRLVERVVQGGSHGVSVGGTTGEPGTQTLEERKRAIEVVLDQVAGRVPVIPGTGALRLEETLELTRFAKEAGAQGAMVIVPYYVKPNQEGLYRYFAEVARTVPDFPLLIYNIPGRAGVEIAPKTVGRLRRDFPNIVGLKHSSKDLEYLSHLFLEAGRDFLVFCGLESLTLPMMSLGAVGTIAATANWLPKEVALLCEKALAGDYQGARELHFHLLEANEAIFWDTNPIPLKTVLSWMGLLEKEWRPPLGPTTPEVEERLRRMAERYGLLPKEKEAA</sequence>
<protein>
    <recommendedName>
        <fullName evidence="1">4-hydroxy-tetrahydrodipicolinate synthase</fullName>
        <shortName evidence="1">HTPA synthase</shortName>
        <ecNumber evidence="1">4.3.3.7</ecNumber>
    </recommendedName>
</protein>
<keyword id="KW-0028">Amino-acid biosynthesis</keyword>
<keyword id="KW-0963">Cytoplasm</keyword>
<keyword id="KW-0220">Diaminopimelate biosynthesis</keyword>
<keyword id="KW-0456">Lyase</keyword>
<keyword id="KW-0457">Lysine biosynthesis</keyword>
<keyword id="KW-1185">Reference proteome</keyword>
<keyword id="KW-0704">Schiff base</keyword>
<evidence type="ECO:0000255" key="1">
    <source>
        <dbReference type="HAMAP-Rule" id="MF_00418"/>
    </source>
</evidence>
<evidence type="ECO:0000305" key="2"/>
<proteinExistence type="inferred from homology"/>
<accession>Q5SJQ1</accession>
<feature type="chain" id="PRO_0000103177" description="4-hydroxy-tetrahydrodipicolinate synthase">
    <location>
        <begin position="1"/>
        <end position="299"/>
    </location>
</feature>
<feature type="active site" description="Proton donor/acceptor" evidence="1">
    <location>
        <position position="133"/>
    </location>
</feature>
<feature type="active site" description="Schiff-base intermediate with substrate" evidence="1">
    <location>
        <position position="162"/>
    </location>
</feature>
<feature type="binding site" evidence="1">
    <location>
        <position position="44"/>
    </location>
    <ligand>
        <name>pyruvate</name>
        <dbReference type="ChEBI" id="CHEBI:15361"/>
    </ligand>
</feature>
<feature type="binding site" evidence="1">
    <location>
        <position position="204"/>
    </location>
    <ligand>
        <name>pyruvate</name>
        <dbReference type="ChEBI" id="CHEBI:15361"/>
    </ligand>
</feature>
<feature type="site" description="Part of a proton relay during catalysis" evidence="1">
    <location>
        <position position="43"/>
    </location>
</feature>
<feature type="site" description="Part of a proton relay during catalysis" evidence="1">
    <location>
        <position position="106"/>
    </location>
</feature>
<name>DAPA_THET8</name>
<comment type="function">
    <text evidence="1">Catalyzes the condensation of (S)-aspartate-beta-semialdehyde [(S)-ASA] and pyruvate to 4-hydroxy-tetrahydrodipicolinate (HTPA).</text>
</comment>
<comment type="catalytic activity">
    <reaction evidence="1">
        <text>L-aspartate 4-semialdehyde + pyruvate = (2S,4S)-4-hydroxy-2,3,4,5-tetrahydrodipicolinate + H2O + H(+)</text>
        <dbReference type="Rhea" id="RHEA:34171"/>
        <dbReference type="ChEBI" id="CHEBI:15361"/>
        <dbReference type="ChEBI" id="CHEBI:15377"/>
        <dbReference type="ChEBI" id="CHEBI:15378"/>
        <dbReference type="ChEBI" id="CHEBI:67139"/>
        <dbReference type="ChEBI" id="CHEBI:537519"/>
        <dbReference type="EC" id="4.3.3.7"/>
    </reaction>
</comment>
<comment type="pathway">
    <text evidence="1">Amino-acid biosynthesis; L-lysine biosynthesis via DAP pathway; (S)-tetrahydrodipicolinate from L-aspartate: step 3/4.</text>
</comment>
<comment type="subunit">
    <text evidence="1">Homotetramer; dimer of dimers.</text>
</comment>
<comment type="subcellular location">
    <subcellularLocation>
        <location evidence="1">Cytoplasm</location>
    </subcellularLocation>
</comment>
<comment type="similarity">
    <text evidence="1">Belongs to the DapA family.</text>
</comment>
<comment type="caution">
    <text evidence="2">Was originally thought to be a dihydrodipicolinate synthase (DHDPS), catalyzing the condensation of (S)-aspartate-beta-semialdehyde [(S)-ASA] and pyruvate to dihydrodipicolinate (DHDP). However, it was shown in E.coli that the product of the enzymatic reaction is not dihydrodipicolinate but in fact (4S)-4-hydroxy-2,3,4,5-tetrahydro-(2S)-dipicolinic acid (HTPA), and that the consecutive dehydration reaction leading to DHDP is not spontaneous but catalyzed by DapB.</text>
</comment>
<organism>
    <name type="scientific">Thermus thermophilus (strain ATCC 27634 / DSM 579 / HB8)</name>
    <dbReference type="NCBI Taxonomy" id="300852"/>
    <lineage>
        <taxon>Bacteria</taxon>
        <taxon>Thermotogati</taxon>
        <taxon>Deinococcota</taxon>
        <taxon>Deinococci</taxon>
        <taxon>Thermales</taxon>
        <taxon>Thermaceae</taxon>
        <taxon>Thermus</taxon>
    </lineage>
</organism>
<dbReference type="EC" id="4.3.3.7" evidence="1"/>
<dbReference type="EMBL" id="AP008226">
    <property type="protein sequence ID" value="BAD70780.1"/>
    <property type="molecule type" value="Genomic_DNA"/>
</dbReference>
<dbReference type="RefSeq" id="YP_144223.1">
    <property type="nucleotide sequence ID" value="NC_006461.1"/>
</dbReference>
<dbReference type="SMR" id="Q5SJQ1"/>
<dbReference type="EnsemblBacteria" id="BAD70780">
    <property type="protein sequence ID" value="BAD70780"/>
    <property type="gene ID" value="BAD70780"/>
</dbReference>
<dbReference type="GeneID" id="3168811"/>
<dbReference type="KEGG" id="ttj:TTHA0957"/>
<dbReference type="PATRIC" id="fig|300852.9.peg.939"/>
<dbReference type="eggNOG" id="COG0329">
    <property type="taxonomic scope" value="Bacteria"/>
</dbReference>
<dbReference type="HOGENOM" id="CLU_049343_7_0_0"/>
<dbReference type="PhylomeDB" id="Q5SJQ1"/>
<dbReference type="UniPathway" id="UPA00034">
    <property type="reaction ID" value="UER00017"/>
</dbReference>
<dbReference type="Proteomes" id="UP000000532">
    <property type="component" value="Chromosome"/>
</dbReference>
<dbReference type="GO" id="GO:0005737">
    <property type="term" value="C:cytoplasm"/>
    <property type="evidence" value="ECO:0007669"/>
    <property type="project" value="UniProtKB-SubCell"/>
</dbReference>
<dbReference type="GO" id="GO:0008840">
    <property type="term" value="F:4-hydroxy-tetrahydrodipicolinate synthase activity"/>
    <property type="evidence" value="ECO:0007669"/>
    <property type="project" value="UniProtKB-UniRule"/>
</dbReference>
<dbReference type="GO" id="GO:0019877">
    <property type="term" value="P:diaminopimelate biosynthetic process"/>
    <property type="evidence" value="ECO:0007669"/>
    <property type="project" value="UniProtKB-UniRule"/>
</dbReference>
<dbReference type="GO" id="GO:0009089">
    <property type="term" value="P:lysine biosynthetic process via diaminopimelate"/>
    <property type="evidence" value="ECO:0007669"/>
    <property type="project" value="UniProtKB-UniRule"/>
</dbReference>
<dbReference type="CDD" id="cd00950">
    <property type="entry name" value="DHDPS"/>
    <property type="match status" value="1"/>
</dbReference>
<dbReference type="Gene3D" id="3.20.20.70">
    <property type="entry name" value="Aldolase class I"/>
    <property type="match status" value="1"/>
</dbReference>
<dbReference type="HAMAP" id="MF_00418">
    <property type="entry name" value="DapA"/>
    <property type="match status" value="1"/>
</dbReference>
<dbReference type="InterPro" id="IPR013785">
    <property type="entry name" value="Aldolase_TIM"/>
</dbReference>
<dbReference type="InterPro" id="IPR005263">
    <property type="entry name" value="DapA"/>
</dbReference>
<dbReference type="InterPro" id="IPR002220">
    <property type="entry name" value="DapA-like"/>
</dbReference>
<dbReference type="InterPro" id="IPR012691">
    <property type="entry name" value="HpaI_NOT_DapA"/>
</dbReference>
<dbReference type="InterPro" id="IPR020625">
    <property type="entry name" value="Schiff_base-form_aldolases_AS"/>
</dbReference>
<dbReference type="NCBIfam" id="TIGR00674">
    <property type="entry name" value="dapA"/>
    <property type="match status" value="1"/>
</dbReference>
<dbReference type="NCBIfam" id="TIGR02313">
    <property type="entry name" value="HpaI-NOT-DapA"/>
    <property type="match status" value="1"/>
</dbReference>
<dbReference type="PANTHER" id="PTHR12128:SF66">
    <property type="entry name" value="4-HYDROXY-2-OXOGLUTARATE ALDOLASE, MITOCHONDRIAL"/>
    <property type="match status" value="1"/>
</dbReference>
<dbReference type="PANTHER" id="PTHR12128">
    <property type="entry name" value="DIHYDRODIPICOLINATE SYNTHASE"/>
    <property type="match status" value="1"/>
</dbReference>
<dbReference type="Pfam" id="PF00701">
    <property type="entry name" value="DHDPS"/>
    <property type="match status" value="1"/>
</dbReference>
<dbReference type="PIRSF" id="PIRSF001365">
    <property type="entry name" value="DHDPS"/>
    <property type="match status" value="1"/>
</dbReference>
<dbReference type="PRINTS" id="PR00146">
    <property type="entry name" value="DHPICSNTHASE"/>
</dbReference>
<dbReference type="SMART" id="SM01130">
    <property type="entry name" value="DHDPS"/>
    <property type="match status" value="1"/>
</dbReference>
<dbReference type="SUPFAM" id="SSF51569">
    <property type="entry name" value="Aldolase"/>
    <property type="match status" value="1"/>
</dbReference>
<dbReference type="PROSITE" id="PS00666">
    <property type="entry name" value="DHDPS_2"/>
    <property type="match status" value="1"/>
</dbReference>
<reference key="1">
    <citation type="submission" date="2004-11" db="EMBL/GenBank/DDBJ databases">
        <title>Complete genome sequence of Thermus thermophilus HB8.</title>
        <authorList>
            <person name="Masui R."/>
            <person name="Kurokawa K."/>
            <person name="Nakagawa N."/>
            <person name="Tokunaga F."/>
            <person name="Koyama Y."/>
            <person name="Shibata T."/>
            <person name="Oshima T."/>
            <person name="Yokoyama S."/>
            <person name="Yasunaga T."/>
            <person name="Kuramitsu S."/>
        </authorList>
    </citation>
    <scope>NUCLEOTIDE SEQUENCE [LARGE SCALE GENOMIC DNA]</scope>
    <source>
        <strain>ATCC 27634 / DSM 579 / HB8</strain>
    </source>
</reference>
<gene>
    <name evidence="1" type="primary">dapA</name>
    <name type="ordered locus">TTHA0957</name>
</gene>